<name>SUCC_VIBC3</name>
<keyword id="KW-0067">ATP-binding</keyword>
<keyword id="KW-0436">Ligase</keyword>
<keyword id="KW-0460">Magnesium</keyword>
<keyword id="KW-0479">Metal-binding</keyword>
<keyword id="KW-0547">Nucleotide-binding</keyword>
<keyword id="KW-0816">Tricarboxylic acid cycle</keyword>
<gene>
    <name evidence="1" type="primary">sucC</name>
    <name type="ordered locus">VC0395_A1671</name>
    <name type="ordered locus">VC395_2200</name>
</gene>
<comment type="function">
    <text evidence="1">Succinyl-CoA synthetase functions in the citric acid cycle (TCA), coupling the hydrolysis of succinyl-CoA to the synthesis of either ATP or GTP and thus represents the only step of substrate-level phosphorylation in the TCA. The beta subunit provides nucleotide specificity of the enzyme and binds the substrate succinate, while the binding sites for coenzyme A and phosphate are found in the alpha subunit.</text>
</comment>
<comment type="catalytic activity">
    <reaction evidence="1">
        <text>succinate + ATP + CoA = succinyl-CoA + ADP + phosphate</text>
        <dbReference type="Rhea" id="RHEA:17661"/>
        <dbReference type="ChEBI" id="CHEBI:30031"/>
        <dbReference type="ChEBI" id="CHEBI:30616"/>
        <dbReference type="ChEBI" id="CHEBI:43474"/>
        <dbReference type="ChEBI" id="CHEBI:57287"/>
        <dbReference type="ChEBI" id="CHEBI:57292"/>
        <dbReference type="ChEBI" id="CHEBI:456216"/>
        <dbReference type="EC" id="6.2.1.5"/>
    </reaction>
    <physiologicalReaction direction="right-to-left" evidence="1">
        <dbReference type="Rhea" id="RHEA:17663"/>
    </physiologicalReaction>
</comment>
<comment type="catalytic activity">
    <reaction evidence="1">
        <text>GTP + succinate + CoA = succinyl-CoA + GDP + phosphate</text>
        <dbReference type="Rhea" id="RHEA:22120"/>
        <dbReference type="ChEBI" id="CHEBI:30031"/>
        <dbReference type="ChEBI" id="CHEBI:37565"/>
        <dbReference type="ChEBI" id="CHEBI:43474"/>
        <dbReference type="ChEBI" id="CHEBI:57287"/>
        <dbReference type="ChEBI" id="CHEBI:57292"/>
        <dbReference type="ChEBI" id="CHEBI:58189"/>
    </reaction>
    <physiologicalReaction direction="right-to-left" evidence="1">
        <dbReference type="Rhea" id="RHEA:22122"/>
    </physiologicalReaction>
</comment>
<comment type="cofactor">
    <cofactor evidence="1">
        <name>Mg(2+)</name>
        <dbReference type="ChEBI" id="CHEBI:18420"/>
    </cofactor>
    <text evidence="1">Binds 1 Mg(2+) ion per subunit.</text>
</comment>
<comment type="pathway">
    <text evidence="1">Carbohydrate metabolism; tricarboxylic acid cycle; succinate from succinyl-CoA (ligase route): step 1/1.</text>
</comment>
<comment type="subunit">
    <text evidence="1">Heterotetramer of two alpha and two beta subunits.</text>
</comment>
<comment type="similarity">
    <text evidence="1">Belongs to the succinate/malate CoA ligase beta subunit family.</text>
</comment>
<organism>
    <name type="scientific">Vibrio cholerae serotype O1 (strain ATCC 39541 / Classical Ogawa 395 / O395)</name>
    <dbReference type="NCBI Taxonomy" id="345073"/>
    <lineage>
        <taxon>Bacteria</taxon>
        <taxon>Pseudomonadati</taxon>
        <taxon>Pseudomonadota</taxon>
        <taxon>Gammaproteobacteria</taxon>
        <taxon>Vibrionales</taxon>
        <taxon>Vibrionaceae</taxon>
        <taxon>Vibrio</taxon>
    </lineage>
</organism>
<feature type="chain" id="PRO_1000082256" description="Succinate--CoA ligase [ADP-forming] subunit beta">
    <location>
        <begin position="1"/>
        <end position="388"/>
    </location>
</feature>
<feature type="domain" description="ATP-grasp" evidence="1">
    <location>
        <begin position="9"/>
        <end position="244"/>
    </location>
</feature>
<feature type="binding site" evidence="1">
    <location>
        <position position="46"/>
    </location>
    <ligand>
        <name>ATP</name>
        <dbReference type="ChEBI" id="CHEBI:30616"/>
    </ligand>
</feature>
<feature type="binding site" evidence="1">
    <location>
        <begin position="53"/>
        <end position="55"/>
    </location>
    <ligand>
        <name>ATP</name>
        <dbReference type="ChEBI" id="CHEBI:30616"/>
    </ligand>
</feature>
<feature type="binding site" evidence="1">
    <location>
        <position position="99"/>
    </location>
    <ligand>
        <name>ATP</name>
        <dbReference type="ChEBI" id="CHEBI:30616"/>
    </ligand>
</feature>
<feature type="binding site" evidence="1">
    <location>
        <position position="102"/>
    </location>
    <ligand>
        <name>ATP</name>
        <dbReference type="ChEBI" id="CHEBI:30616"/>
    </ligand>
</feature>
<feature type="binding site" evidence="1">
    <location>
        <position position="107"/>
    </location>
    <ligand>
        <name>ATP</name>
        <dbReference type="ChEBI" id="CHEBI:30616"/>
    </ligand>
</feature>
<feature type="binding site" evidence="1">
    <location>
        <position position="199"/>
    </location>
    <ligand>
        <name>Mg(2+)</name>
        <dbReference type="ChEBI" id="CHEBI:18420"/>
    </ligand>
</feature>
<feature type="binding site" evidence="1">
    <location>
        <position position="213"/>
    </location>
    <ligand>
        <name>Mg(2+)</name>
        <dbReference type="ChEBI" id="CHEBI:18420"/>
    </ligand>
</feature>
<feature type="binding site" evidence="1">
    <location>
        <position position="264"/>
    </location>
    <ligand>
        <name>substrate</name>
        <note>ligand shared with subunit alpha</note>
    </ligand>
</feature>
<feature type="binding site" evidence="1">
    <location>
        <begin position="321"/>
        <end position="323"/>
    </location>
    <ligand>
        <name>substrate</name>
        <note>ligand shared with subunit alpha</note>
    </ligand>
</feature>
<protein>
    <recommendedName>
        <fullName evidence="1">Succinate--CoA ligase [ADP-forming] subunit beta</fullName>
        <ecNumber evidence="1">6.2.1.5</ecNumber>
    </recommendedName>
    <alternativeName>
        <fullName evidence="1">Succinyl-CoA synthetase subunit beta</fullName>
        <shortName evidence="1">SCS-beta</shortName>
    </alternativeName>
</protein>
<evidence type="ECO:0000255" key="1">
    <source>
        <dbReference type="HAMAP-Rule" id="MF_00558"/>
    </source>
</evidence>
<sequence length="388" mass="41399">MNLHEYQAKQLFAEFGLPVPEGYACDTPQEAFEAAGRISTAKKVVKCQVHAGGRGKAGGVELHDTKEGVKAFAQKWLGKNLVTYQTDANGQPVSKILVEEASNIANELYLGAVVDRSTRRIVFMASTEGGVEIEKVAEETPELIHKAAIDPLVGPQAYQGRELAFKLGLQGDQIKQFVKIFMGLGEMFAQYDLALLEINPLVITAEGNLLCLDGKINIDSNAMYRQPKLRQMHDASQEDAREAHAAKWELNYVALDGNVGCMVNGAGLAMGTMDIVNLHGGKPANFLDVGGGATKERVAEAFKIILSDTNVKAVLVNIFGGIVRCDMIAEGIIGAVKEVGVSVPVVVRLEGTNAELGRKVLAESGLDIIAAVSLTDAAQKVVAAAEGK</sequence>
<reference key="1">
    <citation type="submission" date="2007-03" db="EMBL/GenBank/DDBJ databases">
        <authorList>
            <person name="Heidelberg J."/>
        </authorList>
    </citation>
    <scope>NUCLEOTIDE SEQUENCE [LARGE SCALE GENOMIC DNA]</scope>
    <source>
        <strain>ATCC 39541 / Classical Ogawa 395 / O395</strain>
    </source>
</reference>
<reference key="2">
    <citation type="journal article" date="2008" name="PLoS ONE">
        <title>A recalibrated molecular clock and independent origins for the cholera pandemic clones.</title>
        <authorList>
            <person name="Feng L."/>
            <person name="Reeves P.R."/>
            <person name="Lan R."/>
            <person name="Ren Y."/>
            <person name="Gao C."/>
            <person name="Zhou Z."/>
            <person name="Ren Y."/>
            <person name="Cheng J."/>
            <person name="Wang W."/>
            <person name="Wang J."/>
            <person name="Qian W."/>
            <person name="Li D."/>
            <person name="Wang L."/>
        </authorList>
    </citation>
    <scope>NUCLEOTIDE SEQUENCE [LARGE SCALE GENOMIC DNA]</scope>
    <source>
        <strain>ATCC 39541 / Classical Ogawa 395 / O395</strain>
    </source>
</reference>
<dbReference type="EC" id="6.2.1.5" evidence="1"/>
<dbReference type="EMBL" id="CP000627">
    <property type="protein sequence ID" value="ABQ19554.1"/>
    <property type="molecule type" value="Genomic_DNA"/>
</dbReference>
<dbReference type="EMBL" id="CP001235">
    <property type="protein sequence ID" value="ACP10192.1"/>
    <property type="molecule type" value="Genomic_DNA"/>
</dbReference>
<dbReference type="RefSeq" id="WP_001048578.1">
    <property type="nucleotide sequence ID" value="NZ_JAACZH010000001.1"/>
</dbReference>
<dbReference type="SMR" id="A5F6G6"/>
<dbReference type="GeneID" id="89513929"/>
<dbReference type="KEGG" id="vco:VC0395_A1671"/>
<dbReference type="KEGG" id="vcr:VC395_2200"/>
<dbReference type="PATRIC" id="fig|345073.21.peg.2126"/>
<dbReference type="eggNOG" id="COG0045">
    <property type="taxonomic scope" value="Bacteria"/>
</dbReference>
<dbReference type="HOGENOM" id="CLU_037430_0_2_6"/>
<dbReference type="OrthoDB" id="9802602at2"/>
<dbReference type="UniPathway" id="UPA00223">
    <property type="reaction ID" value="UER00999"/>
</dbReference>
<dbReference type="Proteomes" id="UP000000249">
    <property type="component" value="Chromosome 2"/>
</dbReference>
<dbReference type="GO" id="GO:0005829">
    <property type="term" value="C:cytosol"/>
    <property type="evidence" value="ECO:0007669"/>
    <property type="project" value="TreeGrafter"/>
</dbReference>
<dbReference type="GO" id="GO:0042709">
    <property type="term" value="C:succinate-CoA ligase complex"/>
    <property type="evidence" value="ECO:0007669"/>
    <property type="project" value="TreeGrafter"/>
</dbReference>
<dbReference type="GO" id="GO:0005524">
    <property type="term" value="F:ATP binding"/>
    <property type="evidence" value="ECO:0007669"/>
    <property type="project" value="UniProtKB-UniRule"/>
</dbReference>
<dbReference type="GO" id="GO:0000287">
    <property type="term" value="F:magnesium ion binding"/>
    <property type="evidence" value="ECO:0007669"/>
    <property type="project" value="UniProtKB-UniRule"/>
</dbReference>
<dbReference type="GO" id="GO:0004775">
    <property type="term" value="F:succinate-CoA ligase (ADP-forming) activity"/>
    <property type="evidence" value="ECO:0007669"/>
    <property type="project" value="UniProtKB-UniRule"/>
</dbReference>
<dbReference type="GO" id="GO:0004776">
    <property type="term" value="F:succinate-CoA ligase (GDP-forming) activity"/>
    <property type="evidence" value="ECO:0007669"/>
    <property type="project" value="RHEA"/>
</dbReference>
<dbReference type="GO" id="GO:0006104">
    <property type="term" value="P:succinyl-CoA metabolic process"/>
    <property type="evidence" value="ECO:0007669"/>
    <property type="project" value="TreeGrafter"/>
</dbReference>
<dbReference type="GO" id="GO:0006099">
    <property type="term" value="P:tricarboxylic acid cycle"/>
    <property type="evidence" value="ECO:0007669"/>
    <property type="project" value="UniProtKB-UniRule"/>
</dbReference>
<dbReference type="FunFam" id="3.30.1490.20:FF:000002">
    <property type="entry name" value="Succinate--CoA ligase [ADP-forming] subunit beta"/>
    <property type="match status" value="1"/>
</dbReference>
<dbReference type="FunFam" id="3.30.470.20:FF:000002">
    <property type="entry name" value="Succinate--CoA ligase [ADP-forming] subunit beta"/>
    <property type="match status" value="1"/>
</dbReference>
<dbReference type="FunFam" id="3.40.50.261:FF:000001">
    <property type="entry name" value="Succinate--CoA ligase [ADP-forming] subunit beta"/>
    <property type="match status" value="1"/>
</dbReference>
<dbReference type="Gene3D" id="3.30.1490.20">
    <property type="entry name" value="ATP-grasp fold, A domain"/>
    <property type="match status" value="1"/>
</dbReference>
<dbReference type="Gene3D" id="3.30.470.20">
    <property type="entry name" value="ATP-grasp fold, B domain"/>
    <property type="match status" value="1"/>
</dbReference>
<dbReference type="Gene3D" id="3.40.50.261">
    <property type="entry name" value="Succinyl-CoA synthetase domains"/>
    <property type="match status" value="1"/>
</dbReference>
<dbReference type="HAMAP" id="MF_00558">
    <property type="entry name" value="Succ_CoA_beta"/>
    <property type="match status" value="1"/>
</dbReference>
<dbReference type="InterPro" id="IPR011761">
    <property type="entry name" value="ATP-grasp"/>
</dbReference>
<dbReference type="InterPro" id="IPR013650">
    <property type="entry name" value="ATP-grasp_succ-CoA_synth-type"/>
</dbReference>
<dbReference type="InterPro" id="IPR013815">
    <property type="entry name" value="ATP_grasp_subdomain_1"/>
</dbReference>
<dbReference type="InterPro" id="IPR017866">
    <property type="entry name" value="Succ-CoA_synthase_bsu_CS"/>
</dbReference>
<dbReference type="InterPro" id="IPR005811">
    <property type="entry name" value="SUCC_ACL_C"/>
</dbReference>
<dbReference type="InterPro" id="IPR005809">
    <property type="entry name" value="Succ_CoA_ligase-like_bsu"/>
</dbReference>
<dbReference type="InterPro" id="IPR016102">
    <property type="entry name" value="Succinyl-CoA_synth-like"/>
</dbReference>
<dbReference type="NCBIfam" id="NF001913">
    <property type="entry name" value="PRK00696.1"/>
    <property type="match status" value="1"/>
</dbReference>
<dbReference type="NCBIfam" id="TIGR01016">
    <property type="entry name" value="sucCoAbeta"/>
    <property type="match status" value="1"/>
</dbReference>
<dbReference type="PANTHER" id="PTHR11815:SF10">
    <property type="entry name" value="SUCCINATE--COA LIGASE [GDP-FORMING] SUBUNIT BETA, MITOCHONDRIAL"/>
    <property type="match status" value="1"/>
</dbReference>
<dbReference type="PANTHER" id="PTHR11815">
    <property type="entry name" value="SUCCINYL-COA SYNTHETASE BETA CHAIN"/>
    <property type="match status" value="1"/>
</dbReference>
<dbReference type="Pfam" id="PF08442">
    <property type="entry name" value="ATP-grasp_2"/>
    <property type="match status" value="1"/>
</dbReference>
<dbReference type="Pfam" id="PF00549">
    <property type="entry name" value="Ligase_CoA"/>
    <property type="match status" value="1"/>
</dbReference>
<dbReference type="PIRSF" id="PIRSF001554">
    <property type="entry name" value="SucCS_beta"/>
    <property type="match status" value="1"/>
</dbReference>
<dbReference type="SUPFAM" id="SSF56059">
    <property type="entry name" value="Glutathione synthetase ATP-binding domain-like"/>
    <property type="match status" value="1"/>
</dbReference>
<dbReference type="SUPFAM" id="SSF52210">
    <property type="entry name" value="Succinyl-CoA synthetase domains"/>
    <property type="match status" value="1"/>
</dbReference>
<dbReference type="PROSITE" id="PS50975">
    <property type="entry name" value="ATP_GRASP"/>
    <property type="match status" value="1"/>
</dbReference>
<dbReference type="PROSITE" id="PS01217">
    <property type="entry name" value="SUCCINYL_COA_LIG_3"/>
    <property type="match status" value="1"/>
</dbReference>
<accession>A5F6G6</accession>
<accession>C3M2R8</accession>
<proteinExistence type="inferred from homology"/>